<name>RL6_DEHMB</name>
<comment type="function">
    <text evidence="1">This protein binds to the 23S rRNA, and is important in its secondary structure. It is located near the subunit interface in the base of the L7/L12 stalk, and near the tRNA binding site of the peptidyltransferase center.</text>
</comment>
<comment type="subunit">
    <text evidence="1">Part of the 50S ribosomal subunit.</text>
</comment>
<comment type="similarity">
    <text evidence="1">Belongs to the universal ribosomal protein uL6 family.</text>
</comment>
<protein>
    <recommendedName>
        <fullName evidence="1">Large ribosomal subunit protein uL6</fullName>
    </recommendedName>
    <alternativeName>
        <fullName evidence="2">50S ribosomal protein L6</fullName>
    </alternativeName>
</protein>
<accession>A5FRX6</accession>
<keyword id="KW-0687">Ribonucleoprotein</keyword>
<keyword id="KW-0689">Ribosomal protein</keyword>
<keyword id="KW-0694">RNA-binding</keyword>
<keyword id="KW-0699">rRNA-binding</keyword>
<proteinExistence type="inferred from homology"/>
<organism>
    <name type="scientific">Dehalococcoides mccartyi (strain ATCC BAA-2100 / JCM 16839 / KCTC 5957 / BAV1)</name>
    <dbReference type="NCBI Taxonomy" id="216389"/>
    <lineage>
        <taxon>Bacteria</taxon>
        <taxon>Bacillati</taxon>
        <taxon>Chloroflexota</taxon>
        <taxon>Dehalococcoidia</taxon>
        <taxon>Dehalococcoidales</taxon>
        <taxon>Dehalococcoidaceae</taxon>
        <taxon>Dehalococcoides</taxon>
    </lineage>
</organism>
<reference key="1">
    <citation type="submission" date="2007-05" db="EMBL/GenBank/DDBJ databases">
        <title>Complete sequence of Dehalococcoides sp. BAV1.</title>
        <authorList>
            <consortium name="US DOE Joint Genome Institute"/>
            <person name="Copeland A."/>
            <person name="Lucas S."/>
            <person name="Lapidus A."/>
            <person name="Barry K."/>
            <person name="Detter J.C."/>
            <person name="Glavina del Rio T."/>
            <person name="Hammon N."/>
            <person name="Israni S."/>
            <person name="Pitluck S."/>
            <person name="Lowry S."/>
            <person name="Clum A."/>
            <person name="Schmutz J."/>
            <person name="Larimer F."/>
            <person name="Land M."/>
            <person name="Hauser L."/>
            <person name="Kyrpides N."/>
            <person name="Kim E."/>
            <person name="Ritalahti K.M."/>
            <person name="Loeffler F."/>
            <person name="Richardson P."/>
        </authorList>
    </citation>
    <scope>NUCLEOTIDE SEQUENCE [LARGE SCALE GENOMIC DNA]</scope>
    <source>
        <strain>ATCC BAA-2100 / JCM 16839 / KCTC 5957 / BAV1</strain>
    </source>
</reference>
<gene>
    <name evidence="1" type="primary">rplF</name>
    <name type="ordered locus">DehaBAV1_0466</name>
</gene>
<feature type="chain" id="PRO_1000087040" description="Large ribosomal subunit protein uL6">
    <location>
        <begin position="1"/>
        <end position="182"/>
    </location>
</feature>
<dbReference type="EMBL" id="CP000688">
    <property type="protein sequence ID" value="ABQ17051.1"/>
    <property type="molecule type" value="Genomic_DNA"/>
</dbReference>
<dbReference type="SMR" id="A5FRX6"/>
<dbReference type="KEGG" id="deb:DehaBAV1_0466"/>
<dbReference type="PATRIC" id="fig|216389.18.peg.509"/>
<dbReference type="HOGENOM" id="CLU_065464_1_2_0"/>
<dbReference type="GO" id="GO:0022625">
    <property type="term" value="C:cytosolic large ribosomal subunit"/>
    <property type="evidence" value="ECO:0007669"/>
    <property type="project" value="TreeGrafter"/>
</dbReference>
<dbReference type="GO" id="GO:0019843">
    <property type="term" value="F:rRNA binding"/>
    <property type="evidence" value="ECO:0007669"/>
    <property type="project" value="UniProtKB-UniRule"/>
</dbReference>
<dbReference type="GO" id="GO:0003735">
    <property type="term" value="F:structural constituent of ribosome"/>
    <property type="evidence" value="ECO:0007669"/>
    <property type="project" value="InterPro"/>
</dbReference>
<dbReference type="GO" id="GO:0002181">
    <property type="term" value="P:cytoplasmic translation"/>
    <property type="evidence" value="ECO:0007669"/>
    <property type="project" value="TreeGrafter"/>
</dbReference>
<dbReference type="FunFam" id="3.90.930.12:FF:000002">
    <property type="entry name" value="50S ribosomal protein L6"/>
    <property type="match status" value="1"/>
</dbReference>
<dbReference type="Gene3D" id="3.90.930.12">
    <property type="entry name" value="Ribosomal protein L6, alpha-beta domain"/>
    <property type="match status" value="2"/>
</dbReference>
<dbReference type="HAMAP" id="MF_01365_B">
    <property type="entry name" value="Ribosomal_uL6_B"/>
    <property type="match status" value="1"/>
</dbReference>
<dbReference type="InterPro" id="IPR000702">
    <property type="entry name" value="Ribosomal_uL6-like"/>
</dbReference>
<dbReference type="InterPro" id="IPR036789">
    <property type="entry name" value="Ribosomal_uL6-like_a/b-dom_sf"/>
</dbReference>
<dbReference type="InterPro" id="IPR020040">
    <property type="entry name" value="Ribosomal_uL6_a/b-dom"/>
</dbReference>
<dbReference type="InterPro" id="IPR019906">
    <property type="entry name" value="Ribosomal_uL6_bac-type"/>
</dbReference>
<dbReference type="NCBIfam" id="TIGR03654">
    <property type="entry name" value="L6_bact"/>
    <property type="match status" value="1"/>
</dbReference>
<dbReference type="PANTHER" id="PTHR11655">
    <property type="entry name" value="60S/50S RIBOSOMAL PROTEIN L6/L9"/>
    <property type="match status" value="1"/>
</dbReference>
<dbReference type="PANTHER" id="PTHR11655:SF14">
    <property type="entry name" value="LARGE RIBOSOMAL SUBUNIT PROTEIN UL6M"/>
    <property type="match status" value="1"/>
</dbReference>
<dbReference type="Pfam" id="PF00347">
    <property type="entry name" value="Ribosomal_L6"/>
    <property type="match status" value="2"/>
</dbReference>
<dbReference type="PIRSF" id="PIRSF002162">
    <property type="entry name" value="Ribosomal_L6"/>
    <property type="match status" value="1"/>
</dbReference>
<dbReference type="PRINTS" id="PR00059">
    <property type="entry name" value="RIBOSOMALL6"/>
</dbReference>
<dbReference type="SUPFAM" id="SSF56053">
    <property type="entry name" value="Ribosomal protein L6"/>
    <property type="match status" value="2"/>
</dbReference>
<evidence type="ECO:0000255" key="1">
    <source>
        <dbReference type="HAMAP-Rule" id="MF_01365"/>
    </source>
</evidence>
<evidence type="ECO:0000305" key="2"/>
<sequence length="182" mass="19471">MSRIGKMPIKVPLGIKVDINGNDVTVKGPKGTLSRSFRPEVTINREGDYLVVAPVGTDKATRAFFGLSRTLLDNMIVGVKDGFDKNLEIVGVGMRADKDGDKVVFKVGFSHSVTVAPPAGITLSVDGTTKVKVSGINKEDVGQMAAEIRSIRKPDHYMGKGIRYAGEYVRIKPGKAIGKGAK</sequence>